<evidence type="ECO:0000255" key="1">
    <source>
        <dbReference type="HAMAP-Rule" id="MF_00315"/>
    </source>
</evidence>
<dbReference type="EC" id="2.2.1.7" evidence="1"/>
<dbReference type="EMBL" id="CP000915">
    <property type="protein sequence ID" value="ACD30864.1"/>
    <property type="molecule type" value="Genomic_DNA"/>
</dbReference>
<dbReference type="SMR" id="B2SGK5"/>
<dbReference type="KEGG" id="ftm:FTM_0932"/>
<dbReference type="HOGENOM" id="CLU_009227_1_4_6"/>
<dbReference type="UniPathway" id="UPA00064">
    <property type="reaction ID" value="UER00091"/>
</dbReference>
<dbReference type="GO" id="GO:0005829">
    <property type="term" value="C:cytosol"/>
    <property type="evidence" value="ECO:0007669"/>
    <property type="project" value="TreeGrafter"/>
</dbReference>
<dbReference type="GO" id="GO:0008661">
    <property type="term" value="F:1-deoxy-D-xylulose-5-phosphate synthase activity"/>
    <property type="evidence" value="ECO:0007669"/>
    <property type="project" value="UniProtKB-UniRule"/>
</dbReference>
<dbReference type="GO" id="GO:0000287">
    <property type="term" value="F:magnesium ion binding"/>
    <property type="evidence" value="ECO:0007669"/>
    <property type="project" value="UniProtKB-UniRule"/>
</dbReference>
<dbReference type="GO" id="GO:0030976">
    <property type="term" value="F:thiamine pyrophosphate binding"/>
    <property type="evidence" value="ECO:0007669"/>
    <property type="project" value="UniProtKB-UniRule"/>
</dbReference>
<dbReference type="GO" id="GO:0052865">
    <property type="term" value="P:1-deoxy-D-xylulose 5-phosphate biosynthetic process"/>
    <property type="evidence" value="ECO:0007669"/>
    <property type="project" value="UniProtKB-UniPathway"/>
</dbReference>
<dbReference type="GO" id="GO:0019288">
    <property type="term" value="P:isopentenyl diphosphate biosynthetic process, methylerythritol 4-phosphate pathway"/>
    <property type="evidence" value="ECO:0007669"/>
    <property type="project" value="TreeGrafter"/>
</dbReference>
<dbReference type="GO" id="GO:0016114">
    <property type="term" value="P:terpenoid biosynthetic process"/>
    <property type="evidence" value="ECO:0007669"/>
    <property type="project" value="UniProtKB-UniRule"/>
</dbReference>
<dbReference type="GO" id="GO:0009228">
    <property type="term" value="P:thiamine biosynthetic process"/>
    <property type="evidence" value="ECO:0007669"/>
    <property type="project" value="UniProtKB-UniRule"/>
</dbReference>
<dbReference type="CDD" id="cd02007">
    <property type="entry name" value="TPP_DXS"/>
    <property type="match status" value="1"/>
</dbReference>
<dbReference type="CDD" id="cd07033">
    <property type="entry name" value="TPP_PYR_DXS_TK_like"/>
    <property type="match status" value="1"/>
</dbReference>
<dbReference type="FunFam" id="3.40.50.970:FF:000005">
    <property type="entry name" value="1-deoxy-D-xylulose-5-phosphate synthase"/>
    <property type="match status" value="1"/>
</dbReference>
<dbReference type="Gene3D" id="3.40.50.920">
    <property type="match status" value="1"/>
</dbReference>
<dbReference type="Gene3D" id="3.40.50.970">
    <property type="match status" value="2"/>
</dbReference>
<dbReference type="HAMAP" id="MF_00315">
    <property type="entry name" value="DXP_synth"/>
    <property type="match status" value="1"/>
</dbReference>
<dbReference type="InterPro" id="IPR005477">
    <property type="entry name" value="Dxylulose-5-P_synthase"/>
</dbReference>
<dbReference type="InterPro" id="IPR029061">
    <property type="entry name" value="THDP-binding"/>
</dbReference>
<dbReference type="InterPro" id="IPR009014">
    <property type="entry name" value="Transketo_C/PFOR_II"/>
</dbReference>
<dbReference type="InterPro" id="IPR005475">
    <property type="entry name" value="Transketolase-like_Pyr-bd"/>
</dbReference>
<dbReference type="InterPro" id="IPR020826">
    <property type="entry name" value="Transketolase_BS"/>
</dbReference>
<dbReference type="InterPro" id="IPR033248">
    <property type="entry name" value="Transketolase_C"/>
</dbReference>
<dbReference type="InterPro" id="IPR049557">
    <property type="entry name" value="Transketolase_CS"/>
</dbReference>
<dbReference type="NCBIfam" id="TIGR00204">
    <property type="entry name" value="dxs"/>
    <property type="match status" value="1"/>
</dbReference>
<dbReference type="NCBIfam" id="NF003933">
    <property type="entry name" value="PRK05444.2-2"/>
    <property type="match status" value="1"/>
</dbReference>
<dbReference type="PANTHER" id="PTHR43322">
    <property type="entry name" value="1-D-DEOXYXYLULOSE 5-PHOSPHATE SYNTHASE-RELATED"/>
    <property type="match status" value="1"/>
</dbReference>
<dbReference type="PANTHER" id="PTHR43322:SF5">
    <property type="entry name" value="1-DEOXY-D-XYLULOSE-5-PHOSPHATE SYNTHASE, CHLOROPLASTIC"/>
    <property type="match status" value="1"/>
</dbReference>
<dbReference type="Pfam" id="PF13292">
    <property type="entry name" value="DXP_synthase_N"/>
    <property type="match status" value="1"/>
</dbReference>
<dbReference type="Pfam" id="PF02779">
    <property type="entry name" value="Transket_pyr"/>
    <property type="match status" value="1"/>
</dbReference>
<dbReference type="Pfam" id="PF02780">
    <property type="entry name" value="Transketolase_C"/>
    <property type="match status" value="1"/>
</dbReference>
<dbReference type="SMART" id="SM00861">
    <property type="entry name" value="Transket_pyr"/>
    <property type="match status" value="1"/>
</dbReference>
<dbReference type="SUPFAM" id="SSF52518">
    <property type="entry name" value="Thiamin diphosphate-binding fold (THDP-binding)"/>
    <property type="match status" value="2"/>
</dbReference>
<dbReference type="SUPFAM" id="SSF52922">
    <property type="entry name" value="TK C-terminal domain-like"/>
    <property type="match status" value="1"/>
</dbReference>
<dbReference type="PROSITE" id="PS00801">
    <property type="entry name" value="TRANSKETOLASE_1"/>
    <property type="match status" value="1"/>
</dbReference>
<dbReference type="PROSITE" id="PS00802">
    <property type="entry name" value="TRANSKETOLASE_2"/>
    <property type="match status" value="1"/>
</dbReference>
<reference key="1">
    <citation type="journal article" date="2009" name="PLoS Pathog.">
        <title>Molecular evolutionary consequences of niche restriction in Francisella tularensis, a facultative intracellular pathogen.</title>
        <authorList>
            <person name="Larsson P."/>
            <person name="Elfsmark D."/>
            <person name="Svensson K."/>
            <person name="Wikstroem P."/>
            <person name="Forsman M."/>
            <person name="Brettin T."/>
            <person name="Keim P."/>
            <person name="Johansson A."/>
        </authorList>
    </citation>
    <scope>NUCLEOTIDE SEQUENCE [LARGE SCALE GENOMIC DNA]</scope>
    <source>
        <strain>FSC147</strain>
    </source>
</reference>
<gene>
    <name evidence="1" type="primary">dxs</name>
    <name type="ordered locus">FTM_0932</name>
</gene>
<comment type="function">
    <text evidence="1">Catalyzes the acyloin condensation reaction between C atoms 2 and 3 of pyruvate and glyceraldehyde 3-phosphate to yield 1-deoxy-D-xylulose-5-phosphate (DXP).</text>
</comment>
<comment type="catalytic activity">
    <reaction evidence="1">
        <text>D-glyceraldehyde 3-phosphate + pyruvate + H(+) = 1-deoxy-D-xylulose 5-phosphate + CO2</text>
        <dbReference type="Rhea" id="RHEA:12605"/>
        <dbReference type="ChEBI" id="CHEBI:15361"/>
        <dbReference type="ChEBI" id="CHEBI:15378"/>
        <dbReference type="ChEBI" id="CHEBI:16526"/>
        <dbReference type="ChEBI" id="CHEBI:57792"/>
        <dbReference type="ChEBI" id="CHEBI:59776"/>
        <dbReference type="EC" id="2.2.1.7"/>
    </reaction>
</comment>
<comment type="cofactor">
    <cofactor evidence="1">
        <name>Mg(2+)</name>
        <dbReference type="ChEBI" id="CHEBI:18420"/>
    </cofactor>
    <text evidence="1">Binds 1 Mg(2+) ion per subunit.</text>
</comment>
<comment type="cofactor">
    <cofactor evidence="1">
        <name>thiamine diphosphate</name>
        <dbReference type="ChEBI" id="CHEBI:58937"/>
    </cofactor>
    <text evidence="1">Binds 1 thiamine pyrophosphate per subunit.</text>
</comment>
<comment type="pathway">
    <text evidence="1">Metabolic intermediate biosynthesis; 1-deoxy-D-xylulose 5-phosphate biosynthesis; 1-deoxy-D-xylulose 5-phosphate from D-glyceraldehyde 3-phosphate and pyruvate: step 1/1.</text>
</comment>
<comment type="subunit">
    <text evidence="1">Homodimer.</text>
</comment>
<comment type="similarity">
    <text evidence="1">Belongs to the transketolase family. DXPS subfamily.</text>
</comment>
<sequence>MSKYTILDKINTPSDLKLIPESQLKILSAELRAFLVDTLDVSGGHFASSLGATELTVALHYVYNAPDDNIVWDVGHQTYIHKILTGRKDKLVTIKKDGGISGFPKRSESEYDTFGVGHSSTSISAALGMAIADRLQGKSSNTVAVIGDGAITGGMAFEALNHAGGIKEDILVILNDNEMSISDNVGGLSAHFSKIISGGFYNSIREKGKEVLKNIPPIFEFVKKVETQTKGMFVPANFFEDLGFYYVGPIDGHDVTELVKTLRILKDHKGPKLLHVITKKGKGYTKAESDPIKFHHVAPSFHSGENITTKISKPTYSNIFGDWICQKAAKDKRLVGITPAMKEGSDLIRFSQLYPHRYFDVAIAEQHAVTFAGGLACQGLKPVVAIYSTFLQRAYDQVIHDIALQNLDVLYAVDRAGLVGADGATHDGSFDLAFMRCIPNHVIMTPSDENEAYHMLEFGYEYNGPAMVRYPRGAGIGAEITGSLDLELGKAKIVKQGSKIAILNFGTLLPLAKQLAEKYHATVIDMRFVKPLDEIMLDKVSQTYEIILTLEENCIAGGAGSAVNEYFVAKDLSNKIIVRNFGLQDKFLNHGTKDLLLAQSKLCVENISQELDKLI</sequence>
<name>DXS_FRATM</name>
<keyword id="KW-0414">Isoprene biosynthesis</keyword>
<keyword id="KW-0460">Magnesium</keyword>
<keyword id="KW-0479">Metal-binding</keyword>
<keyword id="KW-0784">Thiamine biosynthesis</keyword>
<keyword id="KW-0786">Thiamine pyrophosphate</keyword>
<keyword id="KW-0808">Transferase</keyword>
<feature type="chain" id="PRO_1000115744" description="1-deoxy-D-xylulose-5-phosphate synthase">
    <location>
        <begin position="1"/>
        <end position="615"/>
    </location>
</feature>
<feature type="binding site" evidence="1">
    <location>
        <position position="76"/>
    </location>
    <ligand>
        <name>thiamine diphosphate</name>
        <dbReference type="ChEBI" id="CHEBI:58937"/>
    </ligand>
</feature>
<feature type="binding site" evidence="1">
    <location>
        <begin position="117"/>
        <end position="119"/>
    </location>
    <ligand>
        <name>thiamine diphosphate</name>
        <dbReference type="ChEBI" id="CHEBI:58937"/>
    </ligand>
</feature>
<feature type="binding site" evidence="1">
    <location>
        <position position="148"/>
    </location>
    <ligand>
        <name>Mg(2+)</name>
        <dbReference type="ChEBI" id="CHEBI:18420"/>
    </ligand>
</feature>
<feature type="binding site" evidence="1">
    <location>
        <begin position="149"/>
        <end position="150"/>
    </location>
    <ligand>
        <name>thiamine diphosphate</name>
        <dbReference type="ChEBI" id="CHEBI:58937"/>
    </ligand>
</feature>
<feature type="binding site" evidence="1">
    <location>
        <position position="177"/>
    </location>
    <ligand>
        <name>Mg(2+)</name>
        <dbReference type="ChEBI" id="CHEBI:18420"/>
    </ligand>
</feature>
<feature type="binding site" evidence="1">
    <location>
        <position position="177"/>
    </location>
    <ligand>
        <name>thiamine diphosphate</name>
        <dbReference type="ChEBI" id="CHEBI:58937"/>
    </ligand>
</feature>
<feature type="binding site" evidence="1">
    <location>
        <position position="284"/>
    </location>
    <ligand>
        <name>thiamine diphosphate</name>
        <dbReference type="ChEBI" id="CHEBI:58937"/>
    </ligand>
</feature>
<feature type="binding site" evidence="1">
    <location>
        <position position="365"/>
    </location>
    <ligand>
        <name>thiamine diphosphate</name>
        <dbReference type="ChEBI" id="CHEBI:58937"/>
    </ligand>
</feature>
<organism>
    <name type="scientific">Francisella tularensis subsp. mediasiatica (strain FSC147)</name>
    <dbReference type="NCBI Taxonomy" id="441952"/>
    <lineage>
        <taxon>Bacteria</taxon>
        <taxon>Pseudomonadati</taxon>
        <taxon>Pseudomonadota</taxon>
        <taxon>Gammaproteobacteria</taxon>
        <taxon>Thiotrichales</taxon>
        <taxon>Francisellaceae</taxon>
        <taxon>Francisella</taxon>
    </lineage>
</organism>
<accession>B2SGK5</accession>
<proteinExistence type="inferred from homology"/>
<protein>
    <recommendedName>
        <fullName evidence="1">1-deoxy-D-xylulose-5-phosphate synthase</fullName>
        <ecNumber evidence="1">2.2.1.7</ecNumber>
    </recommendedName>
    <alternativeName>
        <fullName evidence="1">1-deoxyxylulose-5-phosphate synthase</fullName>
        <shortName evidence="1">DXP synthase</shortName>
        <shortName evidence="1">DXPS</shortName>
    </alternativeName>
</protein>